<protein>
    <recommendedName>
        <fullName evidence="1">Cell division protein FtsZ</fullName>
    </recommendedName>
</protein>
<keyword id="KW-0131">Cell cycle</keyword>
<keyword id="KW-0132">Cell division</keyword>
<keyword id="KW-0963">Cytoplasm</keyword>
<keyword id="KW-0342">GTP-binding</keyword>
<keyword id="KW-0547">Nucleotide-binding</keyword>
<keyword id="KW-1185">Reference proteome</keyword>
<keyword id="KW-0717">Septation</keyword>
<dbReference type="EMBL" id="BA000003">
    <property type="protein sequence ID" value="BAB12929.1"/>
    <property type="molecule type" value="Genomic_DNA"/>
</dbReference>
<dbReference type="RefSeq" id="NP_240043.1">
    <property type="nucleotide sequence ID" value="NC_002528.1"/>
</dbReference>
<dbReference type="RefSeq" id="WP_010896007.1">
    <property type="nucleotide sequence ID" value="NC_002528.1"/>
</dbReference>
<dbReference type="SMR" id="P57308"/>
<dbReference type="STRING" id="563178.BUAP5A_209"/>
<dbReference type="EnsemblBacteria" id="BAB12929">
    <property type="protein sequence ID" value="BAB12929"/>
    <property type="gene ID" value="BAB12929"/>
</dbReference>
<dbReference type="KEGG" id="buc:BU212"/>
<dbReference type="PATRIC" id="fig|107806.10.peg.224"/>
<dbReference type="eggNOG" id="COG0206">
    <property type="taxonomic scope" value="Bacteria"/>
</dbReference>
<dbReference type="HOGENOM" id="CLU_024865_0_1_6"/>
<dbReference type="Proteomes" id="UP000001806">
    <property type="component" value="Chromosome"/>
</dbReference>
<dbReference type="GO" id="GO:0032153">
    <property type="term" value="C:cell division site"/>
    <property type="evidence" value="ECO:0007669"/>
    <property type="project" value="UniProtKB-UniRule"/>
</dbReference>
<dbReference type="GO" id="GO:0005737">
    <property type="term" value="C:cytoplasm"/>
    <property type="evidence" value="ECO:0007669"/>
    <property type="project" value="UniProtKB-SubCell"/>
</dbReference>
<dbReference type="GO" id="GO:0005525">
    <property type="term" value="F:GTP binding"/>
    <property type="evidence" value="ECO:0007669"/>
    <property type="project" value="UniProtKB-UniRule"/>
</dbReference>
<dbReference type="GO" id="GO:0003924">
    <property type="term" value="F:GTPase activity"/>
    <property type="evidence" value="ECO:0007669"/>
    <property type="project" value="UniProtKB-UniRule"/>
</dbReference>
<dbReference type="GO" id="GO:0000917">
    <property type="term" value="P:division septum assembly"/>
    <property type="evidence" value="ECO:0007669"/>
    <property type="project" value="UniProtKB-KW"/>
</dbReference>
<dbReference type="GO" id="GO:0043093">
    <property type="term" value="P:FtsZ-dependent cytokinesis"/>
    <property type="evidence" value="ECO:0007669"/>
    <property type="project" value="UniProtKB-UniRule"/>
</dbReference>
<dbReference type="GO" id="GO:0051258">
    <property type="term" value="P:protein polymerization"/>
    <property type="evidence" value="ECO:0007669"/>
    <property type="project" value="UniProtKB-UniRule"/>
</dbReference>
<dbReference type="CDD" id="cd02201">
    <property type="entry name" value="FtsZ_type1"/>
    <property type="match status" value="1"/>
</dbReference>
<dbReference type="FunFam" id="3.30.1330.20:FF:000004">
    <property type="entry name" value="Cell division protein FtsZ"/>
    <property type="match status" value="1"/>
</dbReference>
<dbReference type="FunFam" id="3.40.50.1440:FF:000023">
    <property type="entry name" value="Cell division protein FtsZ"/>
    <property type="match status" value="1"/>
</dbReference>
<dbReference type="Gene3D" id="3.30.1330.20">
    <property type="entry name" value="Tubulin/FtsZ, C-terminal domain"/>
    <property type="match status" value="1"/>
</dbReference>
<dbReference type="Gene3D" id="3.40.50.1440">
    <property type="entry name" value="Tubulin/FtsZ, GTPase domain"/>
    <property type="match status" value="1"/>
</dbReference>
<dbReference type="HAMAP" id="MF_00909">
    <property type="entry name" value="FtsZ"/>
    <property type="match status" value="1"/>
</dbReference>
<dbReference type="InterPro" id="IPR000158">
    <property type="entry name" value="Cell_div_FtsZ"/>
</dbReference>
<dbReference type="InterPro" id="IPR020805">
    <property type="entry name" value="Cell_div_FtsZ_CS"/>
</dbReference>
<dbReference type="InterPro" id="IPR045061">
    <property type="entry name" value="FtsZ/CetZ"/>
</dbReference>
<dbReference type="InterPro" id="IPR024757">
    <property type="entry name" value="FtsZ_C"/>
</dbReference>
<dbReference type="InterPro" id="IPR008280">
    <property type="entry name" value="Tub_FtsZ_C"/>
</dbReference>
<dbReference type="InterPro" id="IPR037103">
    <property type="entry name" value="Tubulin/FtsZ-like_C"/>
</dbReference>
<dbReference type="InterPro" id="IPR018316">
    <property type="entry name" value="Tubulin/FtsZ_2-layer-sand-dom"/>
</dbReference>
<dbReference type="InterPro" id="IPR036525">
    <property type="entry name" value="Tubulin/FtsZ_GTPase_sf"/>
</dbReference>
<dbReference type="InterPro" id="IPR003008">
    <property type="entry name" value="Tubulin_FtsZ_GTPase"/>
</dbReference>
<dbReference type="NCBIfam" id="TIGR00065">
    <property type="entry name" value="ftsZ"/>
    <property type="match status" value="1"/>
</dbReference>
<dbReference type="PANTHER" id="PTHR30314">
    <property type="entry name" value="CELL DIVISION PROTEIN FTSZ-RELATED"/>
    <property type="match status" value="1"/>
</dbReference>
<dbReference type="PANTHER" id="PTHR30314:SF3">
    <property type="entry name" value="MITOCHONDRIAL DIVISION PROTEIN FSZA"/>
    <property type="match status" value="1"/>
</dbReference>
<dbReference type="Pfam" id="PF12327">
    <property type="entry name" value="FtsZ_C"/>
    <property type="match status" value="1"/>
</dbReference>
<dbReference type="Pfam" id="PF00091">
    <property type="entry name" value="Tubulin"/>
    <property type="match status" value="1"/>
</dbReference>
<dbReference type="PRINTS" id="PR00423">
    <property type="entry name" value="CELLDVISFTSZ"/>
</dbReference>
<dbReference type="SMART" id="SM00864">
    <property type="entry name" value="Tubulin"/>
    <property type="match status" value="1"/>
</dbReference>
<dbReference type="SMART" id="SM00865">
    <property type="entry name" value="Tubulin_C"/>
    <property type="match status" value="1"/>
</dbReference>
<dbReference type="SUPFAM" id="SSF55307">
    <property type="entry name" value="Tubulin C-terminal domain-like"/>
    <property type="match status" value="1"/>
</dbReference>
<dbReference type="SUPFAM" id="SSF52490">
    <property type="entry name" value="Tubulin nucleotide-binding domain-like"/>
    <property type="match status" value="1"/>
</dbReference>
<dbReference type="PROSITE" id="PS01134">
    <property type="entry name" value="FTSZ_1"/>
    <property type="match status" value="1"/>
</dbReference>
<dbReference type="PROSITE" id="PS01135">
    <property type="entry name" value="FTSZ_2"/>
    <property type="match status" value="1"/>
</dbReference>
<reference key="1">
    <citation type="journal article" date="2000" name="Nature">
        <title>Genome sequence of the endocellular bacterial symbiont of aphids Buchnera sp. APS.</title>
        <authorList>
            <person name="Shigenobu S."/>
            <person name="Watanabe H."/>
            <person name="Hattori M."/>
            <person name="Sakaki Y."/>
            <person name="Ishikawa H."/>
        </authorList>
    </citation>
    <scope>NUCLEOTIDE SEQUENCE [LARGE SCALE GENOMIC DNA]</scope>
    <source>
        <strain>APS</strain>
    </source>
</reference>
<sequence>MFEPSELSNNAIIKVIGVGGGGSNAVEHMVRERIEGVEFFAINTDAQALRKIEVGQTIQIGNNITKGLGAGANPEIGRTSAEEDKELLKSALDGSDMVFIAAGMGGGTGTGAAPVVAEIAKELGILTVAVVTKPFNFEGKKRMIVAEQGIIELSKYVDSLIIIPNDKLLKVLSRGISLLDAFSAANNVLKGAVQGIAELITRPGLMNVDFADVRTVMLEMGYAMMGTGISSGENRAEEASEIAISSPLLEDIDLSGARGVLVNITAGFDLKLDEFETVGNTIRSFSSDHATVVIGTSLDPDMNDTLRVTVVATGIGMEKNLDVNQIKNKSSREVLMDYRYQYLNISPKKTDKKIIKKEIKNTKEKINKEPEYLDIPSFLRKRAD</sequence>
<comment type="function">
    <text evidence="1">Essential cell division protein that forms a contractile ring structure (Z ring) at the future cell division site. The regulation of the ring assembly controls the timing and the location of cell division. One of the functions of the FtsZ ring is to recruit other cell division proteins to the septum to produce a new cell wall between the dividing cells. Binds GTP and shows GTPase activity.</text>
</comment>
<comment type="subunit">
    <text evidence="1">Homodimer. Polymerizes to form a dynamic ring structure in a strictly GTP-dependent manner. Interacts directly with several other division proteins.</text>
</comment>
<comment type="subcellular location">
    <subcellularLocation>
        <location evidence="1">Cytoplasm</location>
    </subcellularLocation>
    <text evidence="1">Assembles at midcell at the inner surface of the cytoplasmic membrane.</text>
</comment>
<comment type="similarity">
    <text evidence="1">Belongs to the FtsZ family.</text>
</comment>
<gene>
    <name evidence="1" type="primary">ftsZ</name>
    <name type="ordered locus">BU212</name>
</gene>
<organism>
    <name type="scientific">Buchnera aphidicola subsp. Acyrthosiphon pisum (strain APS)</name>
    <name type="common">Acyrthosiphon pisum symbiotic bacterium</name>
    <dbReference type="NCBI Taxonomy" id="107806"/>
    <lineage>
        <taxon>Bacteria</taxon>
        <taxon>Pseudomonadati</taxon>
        <taxon>Pseudomonadota</taxon>
        <taxon>Gammaproteobacteria</taxon>
        <taxon>Enterobacterales</taxon>
        <taxon>Erwiniaceae</taxon>
        <taxon>Buchnera</taxon>
    </lineage>
</organism>
<evidence type="ECO:0000255" key="1">
    <source>
        <dbReference type="HAMAP-Rule" id="MF_00909"/>
    </source>
</evidence>
<accession>P57308</accession>
<proteinExistence type="inferred from homology"/>
<feature type="chain" id="PRO_0000114344" description="Cell division protein FtsZ">
    <location>
        <begin position="1"/>
        <end position="384"/>
    </location>
</feature>
<feature type="binding site" evidence="1">
    <location>
        <begin position="20"/>
        <end position="24"/>
    </location>
    <ligand>
        <name>GTP</name>
        <dbReference type="ChEBI" id="CHEBI:37565"/>
    </ligand>
</feature>
<feature type="binding site" evidence="1">
    <location>
        <begin position="107"/>
        <end position="109"/>
    </location>
    <ligand>
        <name>GTP</name>
        <dbReference type="ChEBI" id="CHEBI:37565"/>
    </ligand>
</feature>
<feature type="binding site" evidence="1">
    <location>
        <position position="138"/>
    </location>
    <ligand>
        <name>GTP</name>
        <dbReference type="ChEBI" id="CHEBI:37565"/>
    </ligand>
</feature>
<feature type="binding site" evidence="1">
    <location>
        <position position="142"/>
    </location>
    <ligand>
        <name>GTP</name>
        <dbReference type="ChEBI" id="CHEBI:37565"/>
    </ligand>
</feature>
<feature type="binding site" evidence="1">
    <location>
        <position position="186"/>
    </location>
    <ligand>
        <name>GTP</name>
        <dbReference type="ChEBI" id="CHEBI:37565"/>
    </ligand>
</feature>
<name>FTSZ_BUCAI</name>